<sequence>MTSFKLVKYIPRIKKKKSGLRKLARKVPTDRLLKFERVFKAQKRIHMSVFKAQRVLDEIRWRYYEETVMILNLMPYRASYPILKLVYSAAANAAHYRDFDKANLFITKAEVSRSTIMKKFRPRARGRSFPIKKSMCHITIALNIVKRSK</sequence>
<feature type="chain" id="PRO_0000354558" description="Large ribosomal subunit protein uL22c">
    <location>
        <begin position="1"/>
        <end position="149"/>
    </location>
</feature>
<organism>
    <name type="scientific">Brachypodium distachyon</name>
    <name type="common">Purple false brome</name>
    <name type="synonym">Trachynia distachya</name>
    <dbReference type="NCBI Taxonomy" id="15368"/>
    <lineage>
        <taxon>Eukaryota</taxon>
        <taxon>Viridiplantae</taxon>
        <taxon>Streptophyta</taxon>
        <taxon>Embryophyta</taxon>
        <taxon>Tracheophyta</taxon>
        <taxon>Spermatophyta</taxon>
        <taxon>Magnoliopsida</taxon>
        <taxon>Liliopsida</taxon>
        <taxon>Poales</taxon>
        <taxon>Poaceae</taxon>
        <taxon>BOP clade</taxon>
        <taxon>Pooideae</taxon>
        <taxon>Stipodae</taxon>
        <taxon>Brachypodieae</taxon>
        <taxon>Brachypodium</taxon>
    </lineage>
</organism>
<proteinExistence type="inferred from homology"/>
<evidence type="ECO:0000250" key="1"/>
<evidence type="ECO:0000305" key="2"/>
<accession>B3TN89</accession>
<name>RK22_BRADI</name>
<geneLocation type="chloroplast"/>
<dbReference type="EMBL" id="EU325680">
    <property type="protein sequence ID" value="ACF08677.1"/>
    <property type="molecule type" value="Genomic_DNA"/>
</dbReference>
<dbReference type="RefSeq" id="YP_002000525.1">
    <property type="nucleotide sequence ID" value="NC_011032.1"/>
</dbReference>
<dbReference type="SMR" id="B3TN89"/>
<dbReference type="FunCoup" id="B3TN89">
    <property type="interactions" value="239"/>
</dbReference>
<dbReference type="STRING" id="15368.B3TN89"/>
<dbReference type="EnsemblPlants" id="KQK18199">
    <property type="protein sequence ID" value="KQK18199"/>
    <property type="gene ID" value="BRADI_1g05778v3"/>
</dbReference>
<dbReference type="GeneID" id="6439880"/>
<dbReference type="Gramene" id="KQK18199">
    <property type="protein sequence ID" value="KQK18199"/>
    <property type="gene ID" value="BRADI_1g05778v3"/>
</dbReference>
<dbReference type="KEGG" id="bdi:6439880"/>
<dbReference type="InParanoid" id="B3TN89"/>
<dbReference type="OrthoDB" id="1840754at2759"/>
<dbReference type="Proteomes" id="UP000008810">
    <property type="component" value="Unplaced"/>
</dbReference>
<dbReference type="GO" id="GO:0009507">
    <property type="term" value="C:chloroplast"/>
    <property type="evidence" value="ECO:0007669"/>
    <property type="project" value="UniProtKB-SubCell"/>
</dbReference>
<dbReference type="GO" id="GO:0015934">
    <property type="term" value="C:large ribosomal subunit"/>
    <property type="evidence" value="ECO:0000318"/>
    <property type="project" value="GO_Central"/>
</dbReference>
<dbReference type="GO" id="GO:0019843">
    <property type="term" value="F:rRNA binding"/>
    <property type="evidence" value="ECO:0007669"/>
    <property type="project" value="UniProtKB-UniRule"/>
</dbReference>
<dbReference type="GO" id="GO:0003735">
    <property type="term" value="F:structural constituent of ribosome"/>
    <property type="evidence" value="ECO:0000318"/>
    <property type="project" value="GO_Central"/>
</dbReference>
<dbReference type="GO" id="GO:0006412">
    <property type="term" value="P:translation"/>
    <property type="evidence" value="ECO:0000318"/>
    <property type="project" value="GO_Central"/>
</dbReference>
<dbReference type="CDD" id="cd00336">
    <property type="entry name" value="Ribosomal_L22"/>
    <property type="match status" value="1"/>
</dbReference>
<dbReference type="FunFam" id="3.90.470.10:FF:000004">
    <property type="entry name" value="50S ribosomal protein L22, chloroplastic"/>
    <property type="match status" value="1"/>
</dbReference>
<dbReference type="Gene3D" id="3.90.470.10">
    <property type="entry name" value="Ribosomal protein L22/L17"/>
    <property type="match status" value="1"/>
</dbReference>
<dbReference type="HAMAP" id="MF_01331_B">
    <property type="entry name" value="Ribosomal_uL22_B"/>
    <property type="match status" value="1"/>
</dbReference>
<dbReference type="InterPro" id="IPR001063">
    <property type="entry name" value="Ribosomal_uL22"/>
</dbReference>
<dbReference type="InterPro" id="IPR005727">
    <property type="entry name" value="Ribosomal_uL22_bac/chlpt-type"/>
</dbReference>
<dbReference type="InterPro" id="IPR047867">
    <property type="entry name" value="Ribosomal_uL22_bac/org-type"/>
</dbReference>
<dbReference type="InterPro" id="IPR018260">
    <property type="entry name" value="Ribosomal_uL22_CS"/>
</dbReference>
<dbReference type="InterPro" id="IPR036394">
    <property type="entry name" value="Ribosomal_uL22_sf"/>
</dbReference>
<dbReference type="NCBIfam" id="TIGR01044">
    <property type="entry name" value="rplV_bact"/>
    <property type="match status" value="1"/>
</dbReference>
<dbReference type="PANTHER" id="PTHR13501">
    <property type="entry name" value="CHLOROPLAST 50S RIBOSOMAL PROTEIN L22-RELATED"/>
    <property type="match status" value="1"/>
</dbReference>
<dbReference type="PANTHER" id="PTHR13501:SF10">
    <property type="entry name" value="LARGE RIBOSOMAL SUBUNIT PROTEIN UL22M"/>
    <property type="match status" value="1"/>
</dbReference>
<dbReference type="Pfam" id="PF00237">
    <property type="entry name" value="Ribosomal_L22"/>
    <property type="match status" value="1"/>
</dbReference>
<dbReference type="SUPFAM" id="SSF54843">
    <property type="entry name" value="Ribosomal protein L22"/>
    <property type="match status" value="1"/>
</dbReference>
<dbReference type="PROSITE" id="PS00464">
    <property type="entry name" value="RIBOSOMAL_L22"/>
    <property type="match status" value="1"/>
</dbReference>
<protein>
    <recommendedName>
        <fullName evidence="2">Large ribosomal subunit protein uL22c</fullName>
    </recommendedName>
    <alternativeName>
        <fullName>50S ribosomal protein L22, chloroplastic</fullName>
    </alternativeName>
</protein>
<gene>
    <name type="primary">rpl22</name>
</gene>
<comment type="function">
    <text evidence="1">This protein binds specifically to 23S rRNA.</text>
</comment>
<comment type="function">
    <text evidence="1">The globular domain of the protein is located near the polypeptide exit tunnel on the outside of the subunit, while an extended beta-hairpin is found that lines the wall of the exit tunnel in the center of the 70S ribosome.</text>
</comment>
<comment type="subunit">
    <text evidence="1">Part of the 50S ribosomal subunit.</text>
</comment>
<comment type="subcellular location">
    <subcellularLocation>
        <location>Plastid</location>
        <location>Chloroplast</location>
    </subcellularLocation>
</comment>
<comment type="similarity">
    <text evidence="2">Belongs to the universal ribosomal protein uL22 family.</text>
</comment>
<keyword id="KW-0150">Chloroplast</keyword>
<keyword id="KW-0934">Plastid</keyword>
<keyword id="KW-1185">Reference proteome</keyword>
<keyword id="KW-0687">Ribonucleoprotein</keyword>
<keyword id="KW-0689">Ribosomal protein</keyword>
<keyword id="KW-0694">RNA-binding</keyword>
<keyword id="KW-0699">rRNA-binding</keyword>
<reference key="1">
    <citation type="journal article" date="2008" name="BMC Res. Notes">
        <title>The complete chloroplast genome sequence of Brachypodium distachyon: sequence comparison and phylogenetic analysis of eight grass plastomes.</title>
        <authorList>
            <person name="Bortiri E."/>
            <person name="Coleman-Derr D."/>
            <person name="Lazo G.R."/>
            <person name="Anderson O.D."/>
            <person name="Gu Y.Q."/>
        </authorList>
    </citation>
    <scope>NUCLEOTIDE SEQUENCE [LARGE SCALE GENOMIC DNA]</scope>
    <source>
        <strain>cv. Bd21</strain>
    </source>
</reference>